<comment type="function">
    <text evidence="1">Could be a mediator in iron transactions between iron acquisition and iron-requiring processes, such as synthesis and/or repair of Fe-S clusters in biosynthetic enzymes.</text>
</comment>
<comment type="similarity">
    <text evidence="1">Belongs to the Fe(2+)-trafficking protein family.</text>
</comment>
<organism>
    <name type="scientific">Psychrobacter arcticus (strain DSM 17307 / VKM B-2377 / 273-4)</name>
    <dbReference type="NCBI Taxonomy" id="259536"/>
    <lineage>
        <taxon>Bacteria</taxon>
        <taxon>Pseudomonadati</taxon>
        <taxon>Pseudomonadota</taxon>
        <taxon>Gammaproteobacteria</taxon>
        <taxon>Moraxellales</taxon>
        <taxon>Moraxellaceae</taxon>
        <taxon>Psychrobacter</taxon>
    </lineage>
</organism>
<dbReference type="EMBL" id="CP000082">
    <property type="protein sequence ID" value="AAZ17961.1"/>
    <property type="molecule type" value="Genomic_DNA"/>
</dbReference>
<dbReference type="RefSeq" id="WP_011279400.1">
    <property type="nucleotide sequence ID" value="NC_007204.1"/>
</dbReference>
<dbReference type="SMR" id="Q4FVJ7"/>
<dbReference type="STRING" id="259536.Psyc_0087"/>
<dbReference type="KEGG" id="par:Psyc_0087"/>
<dbReference type="eggNOG" id="COG2924">
    <property type="taxonomic scope" value="Bacteria"/>
</dbReference>
<dbReference type="HOGENOM" id="CLU_170994_0_0_6"/>
<dbReference type="OrthoDB" id="9804318at2"/>
<dbReference type="Proteomes" id="UP000000546">
    <property type="component" value="Chromosome"/>
</dbReference>
<dbReference type="GO" id="GO:0005829">
    <property type="term" value="C:cytosol"/>
    <property type="evidence" value="ECO:0007669"/>
    <property type="project" value="TreeGrafter"/>
</dbReference>
<dbReference type="GO" id="GO:0005506">
    <property type="term" value="F:iron ion binding"/>
    <property type="evidence" value="ECO:0007669"/>
    <property type="project" value="UniProtKB-UniRule"/>
</dbReference>
<dbReference type="GO" id="GO:0034599">
    <property type="term" value="P:cellular response to oxidative stress"/>
    <property type="evidence" value="ECO:0007669"/>
    <property type="project" value="TreeGrafter"/>
</dbReference>
<dbReference type="Gene3D" id="1.10.3880.10">
    <property type="entry name" value="Fe(II) trafficking protein YggX"/>
    <property type="match status" value="1"/>
</dbReference>
<dbReference type="HAMAP" id="MF_00686">
    <property type="entry name" value="Fe_traffic_YggX"/>
    <property type="match status" value="1"/>
</dbReference>
<dbReference type="InterPro" id="IPR007457">
    <property type="entry name" value="Fe_traffick_prot_YggX"/>
</dbReference>
<dbReference type="InterPro" id="IPR036766">
    <property type="entry name" value="Fe_traffick_prot_YggX_sf"/>
</dbReference>
<dbReference type="NCBIfam" id="NF003817">
    <property type="entry name" value="PRK05408.1"/>
    <property type="match status" value="1"/>
</dbReference>
<dbReference type="PANTHER" id="PTHR36965">
    <property type="entry name" value="FE(2+)-TRAFFICKING PROTEIN-RELATED"/>
    <property type="match status" value="1"/>
</dbReference>
<dbReference type="PANTHER" id="PTHR36965:SF1">
    <property type="entry name" value="FE(2+)-TRAFFICKING PROTEIN-RELATED"/>
    <property type="match status" value="1"/>
</dbReference>
<dbReference type="Pfam" id="PF04362">
    <property type="entry name" value="Iron_traffic"/>
    <property type="match status" value="1"/>
</dbReference>
<dbReference type="PIRSF" id="PIRSF029827">
    <property type="entry name" value="Fe_traffic_YggX"/>
    <property type="match status" value="1"/>
</dbReference>
<dbReference type="SUPFAM" id="SSF111148">
    <property type="entry name" value="YggX-like"/>
    <property type="match status" value="1"/>
</dbReference>
<accession>Q4FVJ7</accession>
<protein>
    <recommendedName>
        <fullName evidence="1">Probable Fe(2+)-trafficking protein</fullName>
    </recommendedName>
</protein>
<reference key="1">
    <citation type="journal article" date="2010" name="Appl. Environ. Microbiol.">
        <title>The genome sequence of Psychrobacter arcticus 273-4, a psychroactive Siberian permafrost bacterium, reveals mechanisms for adaptation to low-temperature growth.</title>
        <authorList>
            <person name="Ayala-del-Rio H.L."/>
            <person name="Chain P.S."/>
            <person name="Grzymski J.J."/>
            <person name="Ponder M.A."/>
            <person name="Ivanova N."/>
            <person name="Bergholz P.W."/>
            <person name="Di Bartolo G."/>
            <person name="Hauser L."/>
            <person name="Land M."/>
            <person name="Bakermans C."/>
            <person name="Rodrigues D."/>
            <person name="Klappenbach J."/>
            <person name="Zarka D."/>
            <person name="Larimer F."/>
            <person name="Richardson P."/>
            <person name="Murray A."/>
            <person name="Thomashow M."/>
            <person name="Tiedje J.M."/>
        </authorList>
    </citation>
    <scope>NUCLEOTIDE SEQUENCE [LARGE SCALE GENOMIC DNA]</scope>
    <source>
        <strain>DSM 17307 / VKM B-2377 / 273-4</strain>
    </source>
</reference>
<gene>
    <name type="ordered locus">Psyc_0087</name>
</gene>
<name>FETP_PSYA2</name>
<evidence type="ECO:0000255" key="1">
    <source>
        <dbReference type="HAMAP-Rule" id="MF_00686"/>
    </source>
</evidence>
<evidence type="ECO:0000256" key="2">
    <source>
        <dbReference type="SAM" id="MobiDB-lite"/>
    </source>
</evidence>
<feature type="chain" id="PRO_0000246110" description="Probable Fe(2+)-trafficking protein">
    <location>
        <begin position="1"/>
        <end position="96"/>
    </location>
</feature>
<feature type="region of interest" description="Disordered" evidence="2">
    <location>
        <begin position="21"/>
        <end position="40"/>
    </location>
</feature>
<sequence length="96" mass="11428">MTATFNPQANTVFCRKYQQDLPKMPHPPFPNKKGQELQETVSEKAWKEWLEQQTMLINENHLSMLDPKAKQFLTEQRDKFLDNEDYERAQGWTPES</sequence>
<keyword id="KW-0408">Iron</keyword>
<keyword id="KW-1185">Reference proteome</keyword>
<proteinExistence type="inferred from homology"/>